<accession>Q63T70</accession>
<name>ISPD_BURPS</name>
<keyword id="KW-0414">Isoprene biosynthesis</keyword>
<keyword id="KW-0548">Nucleotidyltransferase</keyword>
<keyword id="KW-1185">Reference proteome</keyword>
<keyword id="KW-0808">Transferase</keyword>
<comment type="function">
    <text evidence="1">Catalyzes the formation of 4-diphosphocytidyl-2-C-methyl-D-erythritol from CTP and 2-C-methyl-D-erythritol 4-phosphate (MEP).</text>
</comment>
<comment type="catalytic activity">
    <reaction evidence="1">
        <text>2-C-methyl-D-erythritol 4-phosphate + CTP + H(+) = 4-CDP-2-C-methyl-D-erythritol + diphosphate</text>
        <dbReference type="Rhea" id="RHEA:13429"/>
        <dbReference type="ChEBI" id="CHEBI:15378"/>
        <dbReference type="ChEBI" id="CHEBI:33019"/>
        <dbReference type="ChEBI" id="CHEBI:37563"/>
        <dbReference type="ChEBI" id="CHEBI:57823"/>
        <dbReference type="ChEBI" id="CHEBI:58262"/>
        <dbReference type="EC" id="2.7.7.60"/>
    </reaction>
</comment>
<comment type="pathway">
    <text evidence="1">Isoprenoid biosynthesis; isopentenyl diphosphate biosynthesis via DXP pathway; isopentenyl diphosphate from 1-deoxy-D-xylulose 5-phosphate: step 2/6.</text>
</comment>
<comment type="similarity">
    <text evidence="1">Belongs to the IspD/TarI cytidylyltransferase family. IspD subfamily.</text>
</comment>
<sequence length="236" mass="25379">MTSRLFALIPCAGTGSRSGSALPKQYRTLAGRALLHYTLAAFDACSEFAQTLVVISPDDAHFDARRFAGLRFAVRRCGGASRQASVMNGLIQLAEFGATDADWVLVHDAARPGITPALIRTLIGALKDDPVGGIVALPVADTLKRVPAGGDAIERTESRNGLWQAQTPQMFRIGMLRDAIRRAQLDGHDLTDEASAIEWAGHTPRVVQGSLRNFKVTYPEDFDLAEAILAQPARAS</sequence>
<dbReference type="EC" id="2.7.7.60" evidence="1"/>
<dbReference type="EMBL" id="BX571965">
    <property type="protein sequence ID" value="CAH36102.1"/>
    <property type="molecule type" value="Genomic_DNA"/>
</dbReference>
<dbReference type="RefSeq" id="WP_004191584.1">
    <property type="nucleotide sequence ID" value="NZ_CP009538.1"/>
</dbReference>
<dbReference type="RefSeq" id="YP_108696.1">
    <property type="nucleotide sequence ID" value="NC_006350.1"/>
</dbReference>
<dbReference type="SMR" id="Q63T70"/>
<dbReference type="STRING" id="272560.BPSL2099"/>
<dbReference type="GeneID" id="93060628"/>
<dbReference type="KEGG" id="bps:BPSL2099"/>
<dbReference type="PATRIC" id="fig|272560.51.peg.3380"/>
<dbReference type="eggNOG" id="COG1211">
    <property type="taxonomic scope" value="Bacteria"/>
</dbReference>
<dbReference type="UniPathway" id="UPA00056">
    <property type="reaction ID" value="UER00093"/>
</dbReference>
<dbReference type="Proteomes" id="UP000000605">
    <property type="component" value="Chromosome 1"/>
</dbReference>
<dbReference type="GO" id="GO:0050518">
    <property type="term" value="F:2-C-methyl-D-erythritol 4-phosphate cytidylyltransferase activity"/>
    <property type="evidence" value="ECO:0007669"/>
    <property type="project" value="UniProtKB-UniRule"/>
</dbReference>
<dbReference type="GO" id="GO:0019288">
    <property type="term" value="P:isopentenyl diphosphate biosynthetic process, methylerythritol 4-phosphate pathway"/>
    <property type="evidence" value="ECO:0007669"/>
    <property type="project" value="UniProtKB-UniRule"/>
</dbReference>
<dbReference type="CDD" id="cd02516">
    <property type="entry name" value="CDP-ME_synthetase"/>
    <property type="match status" value="1"/>
</dbReference>
<dbReference type="FunFam" id="3.90.550.10:FF:000003">
    <property type="entry name" value="2-C-methyl-D-erythritol 4-phosphate cytidylyltransferase"/>
    <property type="match status" value="1"/>
</dbReference>
<dbReference type="Gene3D" id="3.90.550.10">
    <property type="entry name" value="Spore Coat Polysaccharide Biosynthesis Protein SpsA, Chain A"/>
    <property type="match status" value="1"/>
</dbReference>
<dbReference type="HAMAP" id="MF_00108">
    <property type="entry name" value="IspD"/>
    <property type="match status" value="1"/>
</dbReference>
<dbReference type="InterPro" id="IPR001228">
    <property type="entry name" value="IspD"/>
</dbReference>
<dbReference type="InterPro" id="IPR034683">
    <property type="entry name" value="IspD/TarI"/>
</dbReference>
<dbReference type="InterPro" id="IPR050088">
    <property type="entry name" value="IspD/TarI_cytidylyltransf_bact"/>
</dbReference>
<dbReference type="InterPro" id="IPR018294">
    <property type="entry name" value="ISPD_synthase_CS"/>
</dbReference>
<dbReference type="InterPro" id="IPR029044">
    <property type="entry name" value="Nucleotide-diphossugar_trans"/>
</dbReference>
<dbReference type="NCBIfam" id="TIGR00453">
    <property type="entry name" value="ispD"/>
    <property type="match status" value="1"/>
</dbReference>
<dbReference type="PANTHER" id="PTHR32125">
    <property type="entry name" value="2-C-METHYL-D-ERYTHRITOL 4-PHOSPHATE CYTIDYLYLTRANSFERASE, CHLOROPLASTIC"/>
    <property type="match status" value="1"/>
</dbReference>
<dbReference type="PANTHER" id="PTHR32125:SF4">
    <property type="entry name" value="2-C-METHYL-D-ERYTHRITOL 4-PHOSPHATE CYTIDYLYLTRANSFERASE, CHLOROPLASTIC"/>
    <property type="match status" value="1"/>
</dbReference>
<dbReference type="Pfam" id="PF01128">
    <property type="entry name" value="IspD"/>
    <property type="match status" value="1"/>
</dbReference>
<dbReference type="SUPFAM" id="SSF53448">
    <property type="entry name" value="Nucleotide-diphospho-sugar transferases"/>
    <property type="match status" value="1"/>
</dbReference>
<dbReference type="PROSITE" id="PS01295">
    <property type="entry name" value="ISPD"/>
    <property type="match status" value="1"/>
</dbReference>
<feature type="chain" id="PRO_0000237777" description="2-C-methyl-D-erythritol 4-phosphate cytidylyltransferase">
    <location>
        <begin position="1"/>
        <end position="236"/>
    </location>
</feature>
<feature type="site" description="Transition state stabilizer" evidence="1">
    <location>
        <position position="17"/>
    </location>
</feature>
<feature type="site" description="Transition state stabilizer" evidence="1">
    <location>
        <position position="24"/>
    </location>
</feature>
<feature type="site" description="Positions MEP for the nucleophilic attack" evidence="1">
    <location>
        <position position="159"/>
    </location>
</feature>
<feature type="site" description="Positions MEP for the nucleophilic attack" evidence="1">
    <location>
        <position position="215"/>
    </location>
</feature>
<protein>
    <recommendedName>
        <fullName evidence="1">2-C-methyl-D-erythritol 4-phosphate cytidylyltransferase</fullName>
        <ecNumber evidence="1">2.7.7.60</ecNumber>
    </recommendedName>
    <alternativeName>
        <fullName evidence="1">4-diphosphocytidyl-2C-methyl-D-erythritol synthase</fullName>
    </alternativeName>
    <alternativeName>
        <fullName evidence="1">MEP cytidylyltransferase</fullName>
        <shortName evidence="1">MCT</shortName>
    </alternativeName>
</protein>
<evidence type="ECO:0000255" key="1">
    <source>
        <dbReference type="HAMAP-Rule" id="MF_00108"/>
    </source>
</evidence>
<reference key="1">
    <citation type="journal article" date="2004" name="Proc. Natl. Acad. Sci. U.S.A.">
        <title>Genomic plasticity of the causative agent of melioidosis, Burkholderia pseudomallei.</title>
        <authorList>
            <person name="Holden M.T.G."/>
            <person name="Titball R.W."/>
            <person name="Peacock S.J."/>
            <person name="Cerdeno-Tarraga A.-M."/>
            <person name="Atkins T."/>
            <person name="Crossman L.C."/>
            <person name="Pitt T."/>
            <person name="Churcher C."/>
            <person name="Mungall K.L."/>
            <person name="Bentley S.D."/>
            <person name="Sebaihia M."/>
            <person name="Thomson N.R."/>
            <person name="Bason N."/>
            <person name="Beacham I.R."/>
            <person name="Brooks K."/>
            <person name="Brown K.A."/>
            <person name="Brown N.F."/>
            <person name="Challis G.L."/>
            <person name="Cherevach I."/>
            <person name="Chillingworth T."/>
            <person name="Cronin A."/>
            <person name="Crossett B."/>
            <person name="Davis P."/>
            <person name="DeShazer D."/>
            <person name="Feltwell T."/>
            <person name="Fraser A."/>
            <person name="Hance Z."/>
            <person name="Hauser H."/>
            <person name="Holroyd S."/>
            <person name="Jagels K."/>
            <person name="Keith K.E."/>
            <person name="Maddison M."/>
            <person name="Moule S."/>
            <person name="Price C."/>
            <person name="Quail M.A."/>
            <person name="Rabbinowitsch E."/>
            <person name="Rutherford K."/>
            <person name="Sanders M."/>
            <person name="Simmonds M."/>
            <person name="Songsivilai S."/>
            <person name="Stevens K."/>
            <person name="Tumapa S."/>
            <person name="Vesaratchavest M."/>
            <person name="Whitehead S."/>
            <person name="Yeats C."/>
            <person name="Barrell B.G."/>
            <person name="Oyston P.C.F."/>
            <person name="Parkhill J."/>
        </authorList>
    </citation>
    <scope>NUCLEOTIDE SEQUENCE [LARGE SCALE GENOMIC DNA]</scope>
    <source>
        <strain>K96243</strain>
    </source>
</reference>
<organism>
    <name type="scientific">Burkholderia pseudomallei (strain K96243)</name>
    <dbReference type="NCBI Taxonomy" id="272560"/>
    <lineage>
        <taxon>Bacteria</taxon>
        <taxon>Pseudomonadati</taxon>
        <taxon>Pseudomonadota</taxon>
        <taxon>Betaproteobacteria</taxon>
        <taxon>Burkholderiales</taxon>
        <taxon>Burkholderiaceae</taxon>
        <taxon>Burkholderia</taxon>
        <taxon>pseudomallei group</taxon>
    </lineage>
</organism>
<proteinExistence type="inferred from homology"/>
<gene>
    <name evidence="1" type="primary">ispD</name>
    <name type="ordered locus">BPSL2099</name>
</gene>